<evidence type="ECO:0000255" key="1">
    <source>
        <dbReference type="HAMAP-Rule" id="MF_00252"/>
    </source>
</evidence>
<gene>
    <name evidence="1" type="primary">lysS</name>
    <name type="ordered locus">WS0084</name>
</gene>
<feature type="chain" id="PRO_0000152705" description="Lysine--tRNA ligase">
    <location>
        <begin position="1"/>
        <end position="507"/>
    </location>
</feature>
<feature type="binding site" evidence="1">
    <location>
        <position position="406"/>
    </location>
    <ligand>
        <name>Mg(2+)</name>
        <dbReference type="ChEBI" id="CHEBI:18420"/>
        <label>1</label>
    </ligand>
</feature>
<feature type="binding site" evidence="1">
    <location>
        <position position="413"/>
    </location>
    <ligand>
        <name>Mg(2+)</name>
        <dbReference type="ChEBI" id="CHEBI:18420"/>
        <label>1</label>
    </ligand>
</feature>
<feature type="binding site" evidence="1">
    <location>
        <position position="413"/>
    </location>
    <ligand>
        <name>Mg(2+)</name>
        <dbReference type="ChEBI" id="CHEBI:18420"/>
        <label>2</label>
    </ligand>
</feature>
<accession>Q7MAR1</accession>
<proteinExistence type="inferred from homology"/>
<reference key="1">
    <citation type="journal article" date="2003" name="Proc. Natl. Acad. Sci. U.S.A.">
        <title>Complete genome sequence and analysis of Wolinella succinogenes.</title>
        <authorList>
            <person name="Baar C."/>
            <person name="Eppinger M."/>
            <person name="Raddatz G."/>
            <person name="Simon J."/>
            <person name="Lanz C."/>
            <person name="Klimmek O."/>
            <person name="Nandakumar R."/>
            <person name="Gross R."/>
            <person name="Rosinus A."/>
            <person name="Keller H."/>
            <person name="Jagtap P."/>
            <person name="Linke B."/>
            <person name="Meyer F."/>
            <person name="Lederer H."/>
            <person name="Schuster S.C."/>
        </authorList>
    </citation>
    <scope>NUCLEOTIDE SEQUENCE [LARGE SCALE GENOMIC DNA]</scope>
    <source>
        <strain>ATCC 29543 / DSM 1740 / CCUG 13145 / JCM 31913 / LMG 7466 / NCTC 11488 / FDC 602W</strain>
    </source>
</reference>
<name>SYK_WOLSU</name>
<protein>
    <recommendedName>
        <fullName evidence="1">Lysine--tRNA ligase</fullName>
        <ecNumber evidence="1">6.1.1.6</ecNumber>
    </recommendedName>
    <alternativeName>
        <fullName evidence="1">Lysyl-tRNA synthetase</fullName>
        <shortName evidence="1">LysRS</shortName>
    </alternativeName>
</protein>
<keyword id="KW-0030">Aminoacyl-tRNA synthetase</keyword>
<keyword id="KW-0067">ATP-binding</keyword>
<keyword id="KW-0963">Cytoplasm</keyword>
<keyword id="KW-0436">Ligase</keyword>
<keyword id="KW-0460">Magnesium</keyword>
<keyword id="KW-0479">Metal-binding</keyword>
<keyword id="KW-0547">Nucleotide-binding</keyword>
<keyword id="KW-0648">Protein biosynthesis</keyword>
<keyword id="KW-1185">Reference proteome</keyword>
<dbReference type="EC" id="6.1.1.6" evidence="1"/>
<dbReference type="EMBL" id="BX571657">
    <property type="protein sequence ID" value="CAE09252.1"/>
    <property type="molecule type" value="Genomic_DNA"/>
</dbReference>
<dbReference type="RefSeq" id="WP_011138052.1">
    <property type="nucleotide sequence ID" value="NC_005090.1"/>
</dbReference>
<dbReference type="SMR" id="Q7MAR1"/>
<dbReference type="STRING" id="273121.WS0084"/>
<dbReference type="KEGG" id="wsu:WS0084"/>
<dbReference type="eggNOG" id="COG1190">
    <property type="taxonomic scope" value="Bacteria"/>
</dbReference>
<dbReference type="HOGENOM" id="CLU_008255_6_0_7"/>
<dbReference type="Proteomes" id="UP000000422">
    <property type="component" value="Chromosome"/>
</dbReference>
<dbReference type="GO" id="GO:0005829">
    <property type="term" value="C:cytosol"/>
    <property type="evidence" value="ECO:0007669"/>
    <property type="project" value="TreeGrafter"/>
</dbReference>
<dbReference type="GO" id="GO:0005524">
    <property type="term" value="F:ATP binding"/>
    <property type="evidence" value="ECO:0007669"/>
    <property type="project" value="UniProtKB-UniRule"/>
</dbReference>
<dbReference type="GO" id="GO:0004824">
    <property type="term" value="F:lysine-tRNA ligase activity"/>
    <property type="evidence" value="ECO:0007669"/>
    <property type="project" value="UniProtKB-UniRule"/>
</dbReference>
<dbReference type="GO" id="GO:0000287">
    <property type="term" value="F:magnesium ion binding"/>
    <property type="evidence" value="ECO:0007669"/>
    <property type="project" value="UniProtKB-UniRule"/>
</dbReference>
<dbReference type="GO" id="GO:0000049">
    <property type="term" value="F:tRNA binding"/>
    <property type="evidence" value="ECO:0007669"/>
    <property type="project" value="TreeGrafter"/>
</dbReference>
<dbReference type="GO" id="GO:0006430">
    <property type="term" value="P:lysyl-tRNA aminoacylation"/>
    <property type="evidence" value="ECO:0007669"/>
    <property type="project" value="UniProtKB-UniRule"/>
</dbReference>
<dbReference type="CDD" id="cd00775">
    <property type="entry name" value="LysRS_core"/>
    <property type="match status" value="1"/>
</dbReference>
<dbReference type="CDD" id="cd04322">
    <property type="entry name" value="LysRS_N"/>
    <property type="match status" value="1"/>
</dbReference>
<dbReference type="FunFam" id="2.40.50.140:FF:000024">
    <property type="entry name" value="Lysine--tRNA ligase"/>
    <property type="match status" value="1"/>
</dbReference>
<dbReference type="Gene3D" id="3.30.930.10">
    <property type="entry name" value="Bira Bifunctional Protein, Domain 2"/>
    <property type="match status" value="1"/>
</dbReference>
<dbReference type="Gene3D" id="2.40.50.140">
    <property type="entry name" value="Nucleic acid-binding proteins"/>
    <property type="match status" value="1"/>
</dbReference>
<dbReference type="HAMAP" id="MF_00252">
    <property type="entry name" value="Lys_tRNA_synth_class2"/>
    <property type="match status" value="1"/>
</dbReference>
<dbReference type="InterPro" id="IPR004364">
    <property type="entry name" value="Aa-tRNA-synt_II"/>
</dbReference>
<dbReference type="InterPro" id="IPR006195">
    <property type="entry name" value="aa-tRNA-synth_II"/>
</dbReference>
<dbReference type="InterPro" id="IPR045864">
    <property type="entry name" value="aa-tRNA-synth_II/BPL/LPL"/>
</dbReference>
<dbReference type="InterPro" id="IPR002313">
    <property type="entry name" value="Lys-tRNA-ligase_II"/>
</dbReference>
<dbReference type="InterPro" id="IPR044136">
    <property type="entry name" value="Lys-tRNA-ligase_II_N"/>
</dbReference>
<dbReference type="InterPro" id="IPR018149">
    <property type="entry name" value="Lys-tRNA-synth_II_C"/>
</dbReference>
<dbReference type="InterPro" id="IPR012340">
    <property type="entry name" value="NA-bd_OB-fold"/>
</dbReference>
<dbReference type="InterPro" id="IPR004365">
    <property type="entry name" value="NA-bd_OB_tRNA"/>
</dbReference>
<dbReference type="NCBIfam" id="TIGR00499">
    <property type="entry name" value="lysS_bact"/>
    <property type="match status" value="1"/>
</dbReference>
<dbReference type="NCBIfam" id="NF001756">
    <property type="entry name" value="PRK00484.1"/>
    <property type="match status" value="1"/>
</dbReference>
<dbReference type="PANTHER" id="PTHR42918:SF15">
    <property type="entry name" value="LYSINE--TRNA LIGASE, CHLOROPLASTIC_MITOCHONDRIAL"/>
    <property type="match status" value="1"/>
</dbReference>
<dbReference type="PANTHER" id="PTHR42918">
    <property type="entry name" value="LYSYL-TRNA SYNTHETASE"/>
    <property type="match status" value="1"/>
</dbReference>
<dbReference type="Pfam" id="PF00152">
    <property type="entry name" value="tRNA-synt_2"/>
    <property type="match status" value="1"/>
</dbReference>
<dbReference type="Pfam" id="PF01336">
    <property type="entry name" value="tRNA_anti-codon"/>
    <property type="match status" value="1"/>
</dbReference>
<dbReference type="PRINTS" id="PR00982">
    <property type="entry name" value="TRNASYNTHLYS"/>
</dbReference>
<dbReference type="SUPFAM" id="SSF55681">
    <property type="entry name" value="Class II aaRS and biotin synthetases"/>
    <property type="match status" value="1"/>
</dbReference>
<dbReference type="SUPFAM" id="SSF50249">
    <property type="entry name" value="Nucleic acid-binding proteins"/>
    <property type="match status" value="1"/>
</dbReference>
<dbReference type="PROSITE" id="PS50862">
    <property type="entry name" value="AA_TRNA_LIGASE_II"/>
    <property type="match status" value="1"/>
</dbReference>
<organism>
    <name type="scientific">Wolinella succinogenes (strain ATCC 29543 / DSM 1740 / CCUG 13145 / JCM 31913 / LMG 7466 / NCTC 11488 / FDC 602W)</name>
    <name type="common">Vibrio succinogenes</name>
    <dbReference type="NCBI Taxonomy" id="273121"/>
    <lineage>
        <taxon>Bacteria</taxon>
        <taxon>Pseudomonadati</taxon>
        <taxon>Campylobacterota</taxon>
        <taxon>Epsilonproteobacteria</taxon>
        <taxon>Campylobacterales</taxon>
        <taxon>Helicobacteraceae</taxon>
        <taxon>Wolinella</taxon>
    </lineage>
</organism>
<sequence>MFFSNQYIKQRIQKGEELRELGRNPYDNQLMRTLTHAQFLQKFEALKSLESEEKRDESAKESIAGRIKFLRHMGKAAFAKIEDESGILQIYFSQNELGEDFKMLKKLAEVGDIVAVSGFPFVTKTGELSLHALEMKILTKAIVPLPEKYHGLVDVELRYRQRYLDLIMNPEVKETFKLRSQVVSSVRRFFEERGFLEVETPMMHPIPGGANAKPFITHHNALGVDRYLRIAPELYLKRLVVGGFEAVFEINRNFRNEGMDHSHNPEFTMIEFYWAYKTYHELMSLTEELFGYLFERLGLPKILPHGEEMIDFSLPFRRIPYKKALHEIGGVPLEVIEEKEKLRAYLIEKGVRLEGEMGIGKLQAEAFDAFVEEKLINPTFITEFPIEISPLARRSDENPQIADRFELFIGKKEISNGFSELNDPLDQLERFKAQVAAKNAGDEEAQHMDEDYVWALGHGLPPTAGEGIGIDRLVMLLTNNRSIKDVILFPALKVQKSDYTILKEEEA</sequence>
<comment type="catalytic activity">
    <reaction evidence="1">
        <text>tRNA(Lys) + L-lysine + ATP = L-lysyl-tRNA(Lys) + AMP + diphosphate</text>
        <dbReference type="Rhea" id="RHEA:20792"/>
        <dbReference type="Rhea" id="RHEA-COMP:9696"/>
        <dbReference type="Rhea" id="RHEA-COMP:9697"/>
        <dbReference type="ChEBI" id="CHEBI:30616"/>
        <dbReference type="ChEBI" id="CHEBI:32551"/>
        <dbReference type="ChEBI" id="CHEBI:33019"/>
        <dbReference type="ChEBI" id="CHEBI:78442"/>
        <dbReference type="ChEBI" id="CHEBI:78529"/>
        <dbReference type="ChEBI" id="CHEBI:456215"/>
        <dbReference type="EC" id="6.1.1.6"/>
    </reaction>
</comment>
<comment type="cofactor">
    <cofactor evidence="1">
        <name>Mg(2+)</name>
        <dbReference type="ChEBI" id="CHEBI:18420"/>
    </cofactor>
    <text evidence="1">Binds 3 Mg(2+) ions per subunit.</text>
</comment>
<comment type="subunit">
    <text evidence="1">Homodimer.</text>
</comment>
<comment type="subcellular location">
    <subcellularLocation>
        <location evidence="1">Cytoplasm</location>
    </subcellularLocation>
</comment>
<comment type="similarity">
    <text evidence="1">Belongs to the class-II aminoacyl-tRNA synthetase family.</text>
</comment>